<name>TATA_BACC3</name>
<organism>
    <name type="scientific">Bacillus cereus (strain 03BB102)</name>
    <dbReference type="NCBI Taxonomy" id="572264"/>
    <lineage>
        <taxon>Bacteria</taxon>
        <taxon>Bacillati</taxon>
        <taxon>Bacillota</taxon>
        <taxon>Bacilli</taxon>
        <taxon>Bacillales</taxon>
        <taxon>Bacillaceae</taxon>
        <taxon>Bacillus</taxon>
        <taxon>Bacillus cereus group</taxon>
    </lineage>
</organism>
<accession>C1ETB0</accession>
<feature type="chain" id="PRO_1000125190" description="Sec-independent protein translocase protein TatA">
    <location>
        <begin position="1"/>
        <end position="61"/>
    </location>
</feature>
<feature type="transmembrane region" description="Helical" evidence="1">
    <location>
        <begin position="1"/>
        <end position="21"/>
    </location>
</feature>
<proteinExistence type="inferred from homology"/>
<gene>
    <name evidence="1" type="primary">tatA</name>
    <name type="ordered locus">BCA_2327</name>
</gene>
<keyword id="KW-1003">Cell membrane</keyword>
<keyword id="KW-0472">Membrane</keyword>
<keyword id="KW-0653">Protein transport</keyword>
<keyword id="KW-0811">Translocation</keyword>
<keyword id="KW-0812">Transmembrane</keyword>
<keyword id="KW-1133">Transmembrane helix</keyword>
<keyword id="KW-0813">Transport</keyword>
<dbReference type="EMBL" id="CP001407">
    <property type="protein sequence ID" value="ACO27105.1"/>
    <property type="molecule type" value="Genomic_DNA"/>
</dbReference>
<dbReference type="RefSeq" id="WP_000492443.1">
    <property type="nucleotide sequence ID" value="NZ_CP009318.1"/>
</dbReference>
<dbReference type="SMR" id="C1ETB0"/>
<dbReference type="KEGG" id="bcx:BCA_2327"/>
<dbReference type="PATRIC" id="fig|572264.18.peg.2273"/>
<dbReference type="Proteomes" id="UP000002210">
    <property type="component" value="Chromosome"/>
</dbReference>
<dbReference type="GO" id="GO:0033281">
    <property type="term" value="C:TAT protein transport complex"/>
    <property type="evidence" value="ECO:0007669"/>
    <property type="project" value="UniProtKB-UniRule"/>
</dbReference>
<dbReference type="GO" id="GO:0008320">
    <property type="term" value="F:protein transmembrane transporter activity"/>
    <property type="evidence" value="ECO:0007669"/>
    <property type="project" value="UniProtKB-UniRule"/>
</dbReference>
<dbReference type="GO" id="GO:0043953">
    <property type="term" value="P:protein transport by the Tat complex"/>
    <property type="evidence" value="ECO:0007669"/>
    <property type="project" value="UniProtKB-UniRule"/>
</dbReference>
<dbReference type="Gene3D" id="1.20.5.3310">
    <property type="match status" value="1"/>
</dbReference>
<dbReference type="HAMAP" id="MF_00236">
    <property type="entry name" value="TatA_E"/>
    <property type="match status" value="1"/>
</dbReference>
<dbReference type="InterPro" id="IPR003369">
    <property type="entry name" value="TatA/B/E"/>
</dbReference>
<dbReference type="InterPro" id="IPR006312">
    <property type="entry name" value="TatA/E"/>
</dbReference>
<dbReference type="NCBIfam" id="NF011430">
    <property type="entry name" value="PRK14861.1"/>
    <property type="match status" value="1"/>
</dbReference>
<dbReference type="NCBIfam" id="TIGR01411">
    <property type="entry name" value="tatAE"/>
    <property type="match status" value="1"/>
</dbReference>
<dbReference type="PANTHER" id="PTHR42982">
    <property type="entry name" value="SEC-INDEPENDENT PROTEIN TRANSLOCASE PROTEIN TATA"/>
    <property type="match status" value="1"/>
</dbReference>
<dbReference type="PANTHER" id="PTHR42982:SF1">
    <property type="entry name" value="SEC-INDEPENDENT PROTEIN TRANSLOCASE PROTEIN TATA"/>
    <property type="match status" value="1"/>
</dbReference>
<dbReference type="Pfam" id="PF02416">
    <property type="entry name" value="TatA_B_E"/>
    <property type="match status" value="1"/>
</dbReference>
<dbReference type="PRINTS" id="PR01506">
    <property type="entry name" value="TATBPROTEIN"/>
</dbReference>
<evidence type="ECO:0000255" key="1">
    <source>
        <dbReference type="HAMAP-Rule" id="MF_00236"/>
    </source>
</evidence>
<comment type="function">
    <text evidence="1">Part of the twin-arginine translocation (Tat) system that transports large folded proteins containing a characteristic twin-arginine motif in their signal peptide across membranes. TatA could form the protein-conducting channel of the Tat system.</text>
</comment>
<comment type="subunit">
    <text evidence="1">Forms a complex with TatC.</text>
</comment>
<comment type="subcellular location">
    <subcellularLocation>
        <location evidence="1">Cell membrane</location>
        <topology evidence="1">Single-pass membrane protein</topology>
    </subcellularLocation>
</comment>
<comment type="similarity">
    <text evidence="1">Belongs to the TatA/E family.</text>
</comment>
<protein>
    <recommendedName>
        <fullName evidence="1">Sec-independent protein translocase protein TatA</fullName>
    </recommendedName>
</protein>
<reference key="1">
    <citation type="submission" date="2009-02" db="EMBL/GenBank/DDBJ databases">
        <title>Genome sequence of Bacillus cereus 03BB102.</title>
        <authorList>
            <person name="Dodson R.J."/>
            <person name="Jackson P."/>
            <person name="Munk A.C."/>
            <person name="Brettin T."/>
            <person name="Bruce D."/>
            <person name="Detter C."/>
            <person name="Tapia R."/>
            <person name="Han C."/>
            <person name="Sutton G."/>
            <person name="Sims D."/>
        </authorList>
    </citation>
    <scope>NUCLEOTIDE SEQUENCE [LARGE SCALE GENOMIC DNA]</scope>
    <source>
        <strain>03BB102</strain>
    </source>
</reference>
<sequence>MFSNIGFPGLILILVAVLILFGPKKLPEIGKALGETLKEFKKSTKELTDDAFQEKEKKEKM</sequence>